<sequence>MSIQNEMPGYNEMNRFLNQQGAGLTPAEMHGLISGMICGGNNDSSWQPLLHDLTNEGLAFGHELAQALRKMHAATSDALEDDGFLFQLYLPEGDDVSVFDRADALAGWVNHFLLGLGVTQPKLDKVTGETGEAIDDLRNIAQLGYDESEDQEELEMSLEEIIEYVRVAALLCHDTFTRQQPTAPEVRKPTLH</sequence>
<protein>
    <recommendedName>
        <fullName evidence="1">UPF0149 protein YgfB</fullName>
    </recommendedName>
</protein>
<proteinExistence type="inferred from homology"/>
<feature type="chain" id="PRO_1000133398" description="UPF0149 protein YgfB">
    <location>
        <begin position="1"/>
        <end position="192"/>
    </location>
</feature>
<name>YGFB_SALPC</name>
<reference key="1">
    <citation type="journal article" date="2009" name="PLoS ONE">
        <title>Salmonella paratyphi C: genetic divergence from Salmonella choleraesuis and pathogenic convergence with Salmonella typhi.</title>
        <authorList>
            <person name="Liu W.-Q."/>
            <person name="Feng Y."/>
            <person name="Wang Y."/>
            <person name="Zou Q.-H."/>
            <person name="Chen F."/>
            <person name="Guo J.-T."/>
            <person name="Peng Y.-H."/>
            <person name="Jin Y."/>
            <person name="Li Y.-G."/>
            <person name="Hu S.-N."/>
            <person name="Johnston R.N."/>
            <person name="Liu G.-R."/>
            <person name="Liu S.-L."/>
        </authorList>
    </citation>
    <scope>NUCLEOTIDE SEQUENCE [LARGE SCALE GENOMIC DNA]</scope>
    <source>
        <strain>RKS4594</strain>
    </source>
</reference>
<accession>C0PY33</accession>
<organism>
    <name type="scientific">Salmonella paratyphi C (strain RKS4594)</name>
    <dbReference type="NCBI Taxonomy" id="476213"/>
    <lineage>
        <taxon>Bacteria</taxon>
        <taxon>Pseudomonadati</taxon>
        <taxon>Pseudomonadota</taxon>
        <taxon>Gammaproteobacteria</taxon>
        <taxon>Enterobacterales</taxon>
        <taxon>Enterobacteriaceae</taxon>
        <taxon>Salmonella</taxon>
    </lineage>
</organism>
<gene>
    <name evidence="1" type="primary">ygfB</name>
    <name type="ordered locus">SPC_3120</name>
</gene>
<evidence type="ECO:0000255" key="1">
    <source>
        <dbReference type="HAMAP-Rule" id="MF_00346"/>
    </source>
</evidence>
<comment type="similarity">
    <text evidence="1">Belongs to the UPF0149 family.</text>
</comment>
<dbReference type="EMBL" id="CP000857">
    <property type="protein sequence ID" value="ACN47207.1"/>
    <property type="molecule type" value="Genomic_DNA"/>
</dbReference>
<dbReference type="SMR" id="C0PY33"/>
<dbReference type="KEGG" id="sei:SPC_3120"/>
<dbReference type="HOGENOM" id="CLU_085336_1_0_6"/>
<dbReference type="Proteomes" id="UP000001599">
    <property type="component" value="Chromosome"/>
</dbReference>
<dbReference type="GO" id="GO:0005829">
    <property type="term" value="C:cytosol"/>
    <property type="evidence" value="ECO:0007669"/>
    <property type="project" value="TreeGrafter"/>
</dbReference>
<dbReference type="FunFam" id="1.20.120.740:FF:000001">
    <property type="entry name" value="UPF0149 protein YgfB"/>
    <property type="match status" value="1"/>
</dbReference>
<dbReference type="Gene3D" id="1.20.120.740">
    <property type="entry name" value="YgfB uncharacterised protein family UPF0149, PF03695"/>
    <property type="match status" value="1"/>
</dbReference>
<dbReference type="HAMAP" id="MF_00346">
    <property type="entry name" value="UPF0149"/>
    <property type="match status" value="1"/>
</dbReference>
<dbReference type="InterPro" id="IPR011978">
    <property type="entry name" value="YgfB-like"/>
</dbReference>
<dbReference type="InterPro" id="IPR036255">
    <property type="entry name" value="YgfB-like_sf"/>
</dbReference>
<dbReference type="NCBIfam" id="NF002477">
    <property type="entry name" value="PRK01736.1"/>
    <property type="match status" value="1"/>
</dbReference>
<dbReference type="NCBIfam" id="TIGR02292">
    <property type="entry name" value="ygfB_yecA"/>
    <property type="match status" value="1"/>
</dbReference>
<dbReference type="PANTHER" id="PTHR37528">
    <property type="entry name" value="UPF0149 PROTEIN YGFB"/>
    <property type="match status" value="1"/>
</dbReference>
<dbReference type="PANTHER" id="PTHR37528:SF1">
    <property type="entry name" value="UPF0149 PROTEIN YGFB"/>
    <property type="match status" value="1"/>
</dbReference>
<dbReference type="Pfam" id="PF03695">
    <property type="entry name" value="UPF0149"/>
    <property type="match status" value="1"/>
</dbReference>
<dbReference type="SUPFAM" id="SSF101327">
    <property type="entry name" value="YgfB-like"/>
    <property type="match status" value="1"/>
</dbReference>